<gene>
    <name evidence="1" type="primary">arsC</name>
    <name type="ordered locus">BA_3196</name>
    <name type="ordered locus">GBAA_3196</name>
    <name type="ordered locus">BAS2971</name>
</gene>
<dbReference type="EC" id="1.20.4.4" evidence="1"/>
<dbReference type="EMBL" id="AE016879">
    <property type="protein sequence ID" value="AAP26992.1"/>
    <property type="molecule type" value="Genomic_DNA"/>
</dbReference>
<dbReference type="EMBL" id="AE017334">
    <property type="protein sequence ID" value="AAT32312.1"/>
    <property type="molecule type" value="Genomic_DNA"/>
</dbReference>
<dbReference type="EMBL" id="AE017225">
    <property type="protein sequence ID" value="AAT55279.1"/>
    <property type="molecule type" value="Genomic_DNA"/>
</dbReference>
<dbReference type="RefSeq" id="NP_845506.1">
    <property type="nucleotide sequence ID" value="NC_003997.3"/>
</dbReference>
<dbReference type="RefSeq" id="WP_000428348.1">
    <property type="nucleotide sequence ID" value="NZ_WXXJ01000029.1"/>
</dbReference>
<dbReference type="RefSeq" id="YP_029228.1">
    <property type="nucleotide sequence ID" value="NC_005945.1"/>
</dbReference>
<dbReference type="SMR" id="Q81NJ6"/>
<dbReference type="IntAct" id="Q81NJ6">
    <property type="interactions" value="3"/>
</dbReference>
<dbReference type="STRING" id="261594.GBAA_3196"/>
<dbReference type="DNASU" id="1086394"/>
<dbReference type="GeneID" id="45022981"/>
<dbReference type="KEGG" id="ban:BA_3196"/>
<dbReference type="KEGG" id="banh:HYU01_15735"/>
<dbReference type="KEGG" id="bar:GBAA_3196"/>
<dbReference type="KEGG" id="bat:BAS2971"/>
<dbReference type="PATRIC" id="fig|198094.11.peg.3181"/>
<dbReference type="eggNOG" id="COG0394">
    <property type="taxonomic scope" value="Bacteria"/>
</dbReference>
<dbReference type="HOGENOM" id="CLU_071415_3_2_9"/>
<dbReference type="OMA" id="VTMGCNV"/>
<dbReference type="OrthoDB" id="9784339at2"/>
<dbReference type="Proteomes" id="UP000000427">
    <property type="component" value="Chromosome"/>
</dbReference>
<dbReference type="Proteomes" id="UP000000594">
    <property type="component" value="Chromosome"/>
</dbReference>
<dbReference type="GO" id="GO:0005737">
    <property type="term" value="C:cytoplasm"/>
    <property type="evidence" value="ECO:0007669"/>
    <property type="project" value="UniProtKB-SubCell"/>
</dbReference>
<dbReference type="GO" id="GO:0030612">
    <property type="term" value="F:arsenate reductase (thioredoxin) activity"/>
    <property type="evidence" value="ECO:0007669"/>
    <property type="project" value="UniProtKB-UniRule"/>
</dbReference>
<dbReference type="GO" id="GO:0004725">
    <property type="term" value="F:protein tyrosine phosphatase activity"/>
    <property type="evidence" value="ECO:0007669"/>
    <property type="project" value="InterPro"/>
</dbReference>
<dbReference type="GO" id="GO:0046685">
    <property type="term" value="P:response to arsenic-containing substance"/>
    <property type="evidence" value="ECO:0007669"/>
    <property type="project" value="UniProtKB-KW"/>
</dbReference>
<dbReference type="CDD" id="cd16345">
    <property type="entry name" value="LMWP_ArsC"/>
    <property type="match status" value="1"/>
</dbReference>
<dbReference type="FunFam" id="3.40.50.2300:FF:000237">
    <property type="entry name" value="Arsenate reductase"/>
    <property type="match status" value="1"/>
</dbReference>
<dbReference type="Gene3D" id="3.40.50.2300">
    <property type="match status" value="1"/>
</dbReference>
<dbReference type="HAMAP" id="MF_01624">
    <property type="entry name" value="Arsenate_reduct"/>
    <property type="match status" value="1"/>
</dbReference>
<dbReference type="InterPro" id="IPR014064">
    <property type="entry name" value="Arsenate_reductase_ArsC"/>
</dbReference>
<dbReference type="InterPro" id="IPR023485">
    <property type="entry name" value="Ptyr_pPase"/>
</dbReference>
<dbReference type="InterPro" id="IPR036196">
    <property type="entry name" value="Ptyr_pPase_sf"/>
</dbReference>
<dbReference type="NCBIfam" id="TIGR02691">
    <property type="entry name" value="arsC_pI258_fam"/>
    <property type="match status" value="1"/>
</dbReference>
<dbReference type="NCBIfam" id="NF010053">
    <property type="entry name" value="PRK13530.1"/>
    <property type="match status" value="1"/>
</dbReference>
<dbReference type="PANTHER" id="PTHR43428">
    <property type="entry name" value="ARSENATE REDUCTASE"/>
    <property type="match status" value="1"/>
</dbReference>
<dbReference type="PANTHER" id="PTHR43428:SF1">
    <property type="entry name" value="ARSENATE REDUCTASE"/>
    <property type="match status" value="1"/>
</dbReference>
<dbReference type="Pfam" id="PF01451">
    <property type="entry name" value="LMWPc"/>
    <property type="match status" value="1"/>
</dbReference>
<dbReference type="SMART" id="SM00226">
    <property type="entry name" value="LMWPc"/>
    <property type="match status" value="1"/>
</dbReference>
<dbReference type="SUPFAM" id="SSF52788">
    <property type="entry name" value="Phosphotyrosine protein phosphatases I"/>
    <property type="match status" value="1"/>
</dbReference>
<reference key="1">
    <citation type="journal article" date="2003" name="Nature">
        <title>The genome sequence of Bacillus anthracis Ames and comparison to closely related bacteria.</title>
        <authorList>
            <person name="Read T.D."/>
            <person name="Peterson S.N."/>
            <person name="Tourasse N.J."/>
            <person name="Baillie L.W."/>
            <person name="Paulsen I.T."/>
            <person name="Nelson K.E."/>
            <person name="Tettelin H."/>
            <person name="Fouts D.E."/>
            <person name="Eisen J.A."/>
            <person name="Gill S.R."/>
            <person name="Holtzapple E.K."/>
            <person name="Okstad O.A."/>
            <person name="Helgason E."/>
            <person name="Rilstone J."/>
            <person name="Wu M."/>
            <person name="Kolonay J.F."/>
            <person name="Beanan M.J."/>
            <person name="Dodson R.J."/>
            <person name="Brinkac L.M."/>
            <person name="Gwinn M.L."/>
            <person name="DeBoy R.T."/>
            <person name="Madpu R."/>
            <person name="Daugherty S.C."/>
            <person name="Durkin A.S."/>
            <person name="Haft D.H."/>
            <person name="Nelson W.C."/>
            <person name="Peterson J.D."/>
            <person name="Pop M."/>
            <person name="Khouri H.M."/>
            <person name="Radune D."/>
            <person name="Benton J.L."/>
            <person name="Mahamoud Y."/>
            <person name="Jiang L."/>
            <person name="Hance I.R."/>
            <person name="Weidman J.F."/>
            <person name="Berry K.J."/>
            <person name="Plaut R.D."/>
            <person name="Wolf A.M."/>
            <person name="Watkins K.L."/>
            <person name="Nierman W.C."/>
            <person name="Hazen A."/>
            <person name="Cline R.T."/>
            <person name="Redmond C."/>
            <person name="Thwaite J.E."/>
            <person name="White O."/>
            <person name="Salzberg S.L."/>
            <person name="Thomason B."/>
            <person name="Friedlander A.M."/>
            <person name="Koehler T.M."/>
            <person name="Hanna P.C."/>
            <person name="Kolstoe A.-B."/>
            <person name="Fraser C.M."/>
        </authorList>
    </citation>
    <scope>NUCLEOTIDE SEQUENCE [LARGE SCALE GENOMIC DNA]</scope>
    <source>
        <strain>Ames / isolate Porton</strain>
    </source>
</reference>
<reference key="2">
    <citation type="journal article" date="2009" name="J. Bacteriol.">
        <title>The complete genome sequence of Bacillus anthracis Ames 'Ancestor'.</title>
        <authorList>
            <person name="Ravel J."/>
            <person name="Jiang L."/>
            <person name="Stanley S.T."/>
            <person name="Wilson M.R."/>
            <person name="Decker R.S."/>
            <person name="Read T.D."/>
            <person name="Worsham P."/>
            <person name="Keim P.S."/>
            <person name="Salzberg S.L."/>
            <person name="Fraser-Liggett C.M."/>
            <person name="Rasko D.A."/>
        </authorList>
    </citation>
    <scope>NUCLEOTIDE SEQUENCE [LARGE SCALE GENOMIC DNA]</scope>
    <source>
        <strain>Ames ancestor</strain>
    </source>
</reference>
<reference key="3">
    <citation type="submission" date="2004-01" db="EMBL/GenBank/DDBJ databases">
        <title>Complete genome sequence of Bacillus anthracis Sterne.</title>
        <authorList>
            <person name="Brettin T.S."/>
            <person name="Bruce D."/>
            <person name="Challacombe J.F."/>
            <person name="Gilna P."/>
            <person name="Han C."/>
            <person name="Hill K."/>
            <person name="Hitchcock P."/>
            <person name="Jackson P."/>
            <person name="Keim P."/>
            <person name="Longmire J."/>
            <person name="Lucas S."/>
            <person name="Okinaka R."/>
            <person name="Richardson P."/>
            <person name="Rubin E."/>
            <person name="Tice H."/>
        </authorList>
    </citation>
    <scope>NUCLEOTIDE SEQUENCE [LARGE SCALE GENOMIC DNA]</scope>
    <source>
        <strain>Sterne</strain>
    </source>
</reference>
<comment type="function">
    <text evidence="1">Catalyzes the reduction of arsenate [As(V)] to arsenite [As(III)].</text>
</comment>
<comment type="catalytic activity">
    <reaction evidence="1">
        <text>arsenate + [thioredoxin]-dithiol + H(+) = arsenite + [thioredoxin]-disulfide + H2O</text>
        <dbReference type="Rhea" id="RHEA:43848"/>
        <dbReference type="Rhea" id="RHEA-COMP:10698"/>
        <dbReference type="Rhea" id="RHEA-COMP:10700"/>
        <dbReference type="ChEBI" id="CHEBI:15377"/>
        <dbReference type="ChEBI" id="CHEBI:15378"/>
        <dbReference type="ChEBI" id="CHEBI:29242"/>
        <dbReference type="ChEBI" id="CHEBI:29950"/>
        <dbReference type="ChEBI" id="CHEBI:48597"/>
        <dbReference type="ChEBI" id="CHEBI:50058"/>
        <dbReference type="EC" id="1.20.4.4"/>
    </reaction>
</comment>
<comment type="subcellular location">
    <subcellularLocation>
        <location evidence="1">Cytoplasm</location>
    </subcellularLocation>
</comment>
<comment type="similarity">
    <text evidence="1">Belongs to the low molecular weight phosphotyrosine protein phosphatase family. Thioredoxin-coupled ArsC subfamily.</text>
</comment>
<organism>
    <name type="scientific">Bacillus anthracis</name>
    <dbReference type="NCBI Taxonomy" id="1392"/>
    <lineage>
        <taxon>Bacteria</taxon>
        <taxon>Bacillati</taxon>
        <taxon>Bacillota</taxon>
        <taxon>Bacilli</taxon>
        <taxon>Bacillales</taxon>
        <taxon>Bacillaceae</taxon>
        <taxon>Bacillus</taxon>
        <taxon>Bacillus cereus group</taxon>
    </lineage>
</organism>
<feature type="chain" id="PRO_0000162511" description="Arsenate reductase">
    <location>
        <begin position="1"/>
        <end position="134"/>
    </location>
</feature>
<feature type="active site" description="Nucleophile" evidence="1">
    <location>
        <position position="11"/>
    </location>
</feature>
<feature type="active site" description="Nucleophile" evidence="1">
    <location>
        <position position="83"/>
    </location>
</feature>
<feature type="active site" description="Nucleophile" evidence="1">
    <location>
        <position position="90"/>
    </location>
</feature>
<feature type="disulfide bond" description="Redox-active; alternate" evidence="1">
    <location>
        <begin position="11"/>
        <end position="83"/>
    </location>
</feature>
<feature type="disulfide bond" description="Redox-active; alternate" evidence="1">
    <location>
        <begin position="83"/>
        <end position="90"/>
    </location>
</feature>
<sequence length="134" mass="15066">MENKKTIYFLCTGNSCRSQMAEAWGKQYLGDKWNVYSAGIEAHGVNPNAIKAMNEVNIDITNQTSDIIDANILNRADLVVTLCSHADAVCPSTPPHVNRVHWGFDDPAGKEWPEFQRVRDEIGERIKRFSETGE</sequence>
<keyword id="KW-0059">Arsenical resistance</keyword>
<keyword id="KW-0963">Cytoplasm</keyword>
<keyword id="KW-1015">Disulfide bond</keyword>
<keyword id="KW-0560">Oxidoreductase</keyword>
<keyword id="KW-0676">Redox-active center</keyword>
<keyword id="KW-1185">Reference proteome</keyword>
<accession>Q81NJ6</accession>
<accession>Q6HWR0</accession>
<accession>Q6KQV2</accession>
<evidence type="ECO:0000255" key="1">
    <source>
        <dbReference type="HAMAP-Rule" id="MF_01624"/>
    </source>
</evidence>
<proteinExistence type="inferred from homology"/>
<protein>
    <recommendedName>
        <fullName evidence="1">Arsenate reductase</fullName>
        <ecNumber evidence="1">1.20.4.4</ecNumber>
    </recommendedName>
</protein>
<name>ARSC_BACAN</name>